<dbReference type="EMBL" id="AK093129">
    <property type="protein sequence ID" value="BAC04067.1"/>
    <property type="molecule type" value="mRNA"/>
</dbReference>
<dbReference type="EMBL" id="AK292350">
    <property type="protein sequence ID" value="BAF85039.1"/>
    <property type="molecule type" value="mRNA"/>
</dbReference>
<dbReference type="EMBL" id="AL139320">
    <property type="status" value="NOT_ANNOTATED_CDS"/>
    <property type="molecule type" value="Genomic_DNA"/>
</dbReference>
<dbReference type="EMBL" id="BC027609">
    <property type="protein sequence ID" value="AAH27609.1"/>
    <property type="molecule type" value="mRNA"/>
</dbReference>
<dbReference type="CCDS" id="CCDS66540.1">
    <molecule id="Q8NA61-2"/>
</dbReference>
<dbReference type="CCDS" id="CCDS9399.1">
    <molecule id="Q8NA61-1"/>
</dbReference>
<dbReference type="RefSeq" id="NP_001273270.1">
    <property type="nucleotide sequence ID" value="NM_001286341.1"/>
</dbReference>
<dbReference type="RefSeq" id="NP_001273271.1">
    <molecule id="Q8NA61-2"/>
    <property type="nucleotide sequence ID" value="NM_001286342.2"/>
</dbReference>
<dbReference type="RefSeq" id="NP_689932.1">
    <molecule id="Q8NA61-1"/>
    <property type="nucleotide sequence ID" value="NM_152719.3"/>
</dbReference>
<dbReference type="SMR" id="Q8NA61"/>
<dbReference type="BioGRID" id="128627">
    <property type="interactions" value="145"/>
</dbReference>
<dbReference type="FunCoup" id="Q8NA61">
    <property type="interactions" value="12"/>
</dbReference>
<dbReference type="IntAct" id="Q8NA61">
    <property type="interactions" value="134"/>
</dbReference>
<dbReference type="MINT" id="Q8NA61"/>
<dbReference type="STRING" id="9606.ENSP00000309189"/>
<dbReference type="GlyGen" id="Q8NA61">
    <property type="glycosylation" value="1 site, 1 O-linked glycan (1 site)"/>
</dbReference>
<dbReference type="iPTMnet" id="Q8NA61"/>
<dbReference type="PhosphoSitePlus" id="Q8NA61"/>
<dbReference type="BioMuta" id="SPERT"/>
<dbReference type="DMDM" id="74751135"/>
<dbReference type="MassIVE" id="Q8NA61"/>
<dbReference type="PaxDb" id="9606-ENSP00000309189"/>
<dbReference type="PeptideAtlas" id="Q8NA61"/>
<dbReference type="ProteomicsDB" id="72645">
    <molecule id="Q8NA61-1"/>
</dbReference>
<dbReference type="ProteomicsDB" id="72646">
    <molecule id="Q8NA61-2"/>
</dbReference>
<dbReference type="Antibodypedia" id="42238">
    <property type="antibodies" value="59 antibodies from 14 providers"/>
</dbReference>
<dbReference type="DNASU" id="220082"/>
<dbReference type="Ensembl" id="ENST00000310521.6">
    <molecule id="Q8NA61-1"/>
    <property type="protein sequence ID" value="ENSP00000309189.1"/>
    <property type="gene ID" value="ENSG00000174015.10"/>
</dbReference>
<dbReference type="Ensembl" id="ENST00000378966.3">
    <molecule id="Q8NA61-2"/>
    <property type="protein sequence ID" value="ENSP00000368249.3"/>
    <property type="gene ID" value="ENSG00000174015.10"/>
</dbReference>
<dbReference type="Ensembl" id="ENST00000610924.1">
    <molecule id="Q8NA61-2"/>
    <property type="protein sequence ID" value="ENSP00000480148.1"/>
    <property type="gene ID" value="ENSG00000174015.10"/>
</dbReference>
<dbReference type="GeneID" id="220082"/>
<dbReference type="KEGG" id="hsa:220082"/>
<dbReference type="MANE-Select" id="ENST00000310521.6">
    <property type="protein sequence ID" value="ENSP00000309189.1"/>
    <property type="RefSeq nucleotide sequence ID" value="NM_152719.3"/>
    <property type="RefSeq protein sequence ID" value="NP_689932.1"/>
</dbReference>
<dbReference type="UCSC" id="uc001van.3">
    <molecule id="Q8NA61-1"/>
    <property type="organism name" value="human"/>
</dbReference>
<dbReference type="AGR" id="HGNC:30720"/>
<dbReference type="CTD" id="220082"/>
<dbReference type="DisGeNET" id="220082"/>
<dbReference type="GeneCards" id="CBY2"/>
<dbReference type="HGNC" id="HGNC:30720">
    <property type="gene designation" value="CBY2"/>
</dbReference>
<dbReference type="HPA" id="ENSG00000174015">
    <property type="expression patterns" value="Tissue enriched (testis)"/>
</dbReference>
<dbReference type="MIM" id="618614">
    <property type="type" value="gene"/>
</dbReference>
<dbReference type="neXtProt" id="NX_Q8NA61"/>
<dbReference type="OpenTargets" id="ENSG00000174015"/>
<dbReference type="VEuPathDB" id="HostDB:ENSG00000174015"/>
<dbReference type="eggNOG" id="ENOG502S6IZ">
    <property type="taxonomic scope" value="Eukaryota"/>
</dbReference>
<dbReference type="GeneTree" id="ENSGT00940000153137"/>
<dbReference type="HOGENOM" id="CLU_041289_0_0_1"/>
<dbReference type="InParanoid" id="Q8NA61"/>
<dbReference type="OMA" id="QNEWSIW"/>
<dbReference type="OrthoDB" id="9025135at2759"/>
<dbReference type="PAN-GO" id="Q8NA61">
    <property type="GO annotations" value="0 GO annotations based on evolutionary models"/>
</dbReference>
<dbReference type="PhylomeDB" id="Q8NA61"/>
<dbReference type="TreeFam" id="TF324419"/>
<dbReference type="PathwayCommons" id="Q8NA61"/>
<dbReference type="SignaLink" id="Q8NA61"/>
<dbReference type="BioGRID-ORCS" id="220082">
    <property type="hits" value="11 hits in 1145 CRISPR screens"/>
</dbReference>
<dbReference type="GenomeRNAi" id="220082"/>
<dbReference type="Pharos" id="Q8NA61">
    <property type="development level" value="Tbio"/>
</dbReference>
<dbReference type="PRO" id="PR:Q8NA61"/>
<dbReference type="Proteomes" id="UP000005640">
    <property type="component" value="Chromosome 13"/>
</dbReference>
<dbReference type="RNAct" id="Q8NA61">
    <property type="molecule type" value="protein"/>
</dbReference>
<dbReference type="Bgee" id="ENSG00000174015">
    <property type="expression patterns" value="Expressed in left testis and 34 other cell types or tissues"/>
</dbReference>
<dbReference type="ExpressionAtlas" id="Q8NA61">
    <property type="expression patterns" value="baseline and differential"/>
</dbReference>
<dbReference type="GO" id="GO:0031410">
    <property type="term" value="C:cytoplasmic vesicle"/>
    <property type="evidence" value="ECO:0000250"/>
    <property type="project" value="HGNC-UCL"/>
</dbReference>
<dbReference type="GO" id="GO:0042802">
    <property type="term" value="F:identical protein binding"/>
    <property type="evidence" value="ECO:0000353"/>
    <property type="project" value="IntAct"/>
</dbReference>
<dbReference type="CDD" id="cd07429">
    <property type="entry name" value="Cby_like"/>
    <property type="match status" value="1"/>
</dbReference>
<dbReference type="InterPro" id="IPR028118">
    <property type="entry name" value="Chibby_fam"/>
</dbReference>
<dbReference type="PANTHER" id="PTHR21533">
    <property type="entry name" value="LEUCINE-RICH PROTEIN"/>
    <property type="match status" value="1"/>
</dbReference>
<dbReference type="PANTHER" id="PTHR21533:SF13">
    <property type="entry name" value="PROTEIN CHIBBY HOMOLOG 2"/>
    <property type="match status" value="1"/>
</dbReference>
<dbReference type="Pfam" id="PF14645">
    <property type="entry name" value="Chibby"/>
    <property type="match status" value="1"/>
</dbReference>
<keyword id="KW-0025">Alternative splicing</keyword>
<keyword id="KW-0175">Coiled coil</keyword>
<keyword id="KW-0597">Phosphoprotein</keyword>
<keyword id="KW-1267">Proteomics identification</keyword>
<keyword id="KW-1185">Reference proteome</keyword>
<name>CBY2_HUMAN</name>
<evidence type="ECO:0000250" key="1"/>
<evidence type="ECO:0000250" key="2">
    <source>
        <dbReference type="UniProtKB" id="Q6AXV6"/>
    </source>
</evidence>
<evidence type="ECO:0000255" key="3"/>
<evidence type="ECO:0000256" key="4">
    <source>
        <dbReference type="SAM" id="MobiDB-lite"/>
    </source>
</evidence>
<evidence type="ECO:0000269" key="5">
    <source>
    </source>
</evidence>
<evidence type="ECO:0000303" key="6">
    <source>
    </source>
</evidence>
<evidence type="ECO:0000303" key="7">
    <source>
    </source>
</evidence>
<evidence type="ECO:0000305" key="8"/>
<evidence type="ECO:0000312" key="9">
    <source>
        <dbReference type="HGNC" id="HGNC:30720"/>
    </source>
</evidence>
<reference key="1">
    <citation type="journal article" date="2004" name="Nat. Genet.">
        <title>Complete sequencing and characterization of 21,243 full-length human cDNAs.</title>
        <authorList>
            <person name="Ota T."/>
            <person name="Suzuki Y."/>
            <person name="Nishikawa T."/>
            <person name="Otsuki T."/>
            <person name="Sugiyama T."/>
            <person name="Irie R."/>
            <person name="Wakamatsu A."/>
            <person name="Hayashi K."/>
            <person name="Sato H."/>
            <person name="Nagai K."/>
            <person name="Kimura K."/>
            <person name="Makita H."/>
            <person name="Sekine M."/>
            <person name="Obayashi M."/>
            <person name="Nishi T."/>
            <person name="Shibahara T."/>
            <person name="Tanaka T."/>
            <person name="Ishii S."/>
            <person name="Yamamoto J."/>
            <person name="Saito K."/>
            <person name="Kawai Y."/>
            <person name="Isono Y."/>
            <person name="Nakamura Y."/>
            <person name="Nagahari K."/>
            <person name="Murakami K."/>
            <person name="Yasuda T."/>
            <person name="Iwayanagi T."/>
            <person name="Wagatsuma M."/>
            <person name="Shiratori A."/>
            <person name="Sudo H."/>
            <person name="Hosoiri T."/>
            <person name="Kaku Y."/>
            <person name="Kodaira H."/>
            <person name="Kondo H."/>
            <person name="Sugawara M."/>
            <person name="Takahashi M."/>
            <person name="Kanda K."/>
            <person name="Yokoi T."/>
            <person name="Furuya T."/>
            <person name="Kikkawa E."/>
            <person name="Omura Y."/>
            <person name="Abe K."/>
            <person name="Kamihara K."/>
            <person name="Katsuta N."/>
            <person name="Sato K."/>
            <person name="Tanikawa M."/>
            <person name="Yamazaki M."/>
            <person name="Ninomiya K."/>
            <person name="Ishibashi T."/>
            <person name="Yamashita H."/>
            <person name="Murakawa K."/>
            <person name="Fujimori K."/>
            <person name="Tanai H."/>
            <person name="Kimata M."/>
            <person name="Watanabe M."/>
            <person name="Hiraoka S."/>
            <person name="Chiba Y."/>
            <person name="Ishida S."/>
            <person name="Ono Y."/>
            <person name="Takiguchi S."/>
            <person name="Watanabe S."/>
            <person name="Yosida M."/>
            <person name="Hotuta T."/>
            <person name="Kusano J."/>
            <person name="Kanehori K."/>
            <person name="Takahashi-Fujii A."/>
            <person name="Hara H."/>
            <person name="Tanase T.-O."/>
            <person name="Nomura Y."/>
            <person name="Togiya S."/>
            <person name="Komai F."/>
            <person name="Hara R."/>
            <person name="Takeuchi K."/>
            <person name="Arita M."/>
            <person name="Imose N."/>
            <person name="Musashino K."/>
            <person name="Yuuki H."/>
            <person name="Oshima A."/>
            <person name="Sasaki N."/>
            <person name="Aotsuka S."/>
            <person name="Yoshikawa Y."/>
            <person name="Matsunawa H."/>
            <person name="Ichihara T."/>
            <person name="Shiohata N."/>
            <person name="Sano S."/>
            <person name="Moriya S."/>
            <person name="Momiyama H."/>
            <person name="Satoh N."/>
            <person name="Takami S."/>
            <person name="Terashima Y."/>
            <person name="Suzuki O."/>
            <person name="Nakagawa S."/>
            <person name="Senoh A."/>
            <person name="Mizoguchi H."/>
            <person name="Goto Y."/>
            <person name="Shimizu F."/>
            <person name="Wakebe H."/>
            <person name="Hishigaki H."/>
            <person name="Watanabe T."/>
            <person name="Sugiyama A."/>
            <person name="Takemoto M."/>
            <person name="Kawakami B."/>
            <person name="Yamazaki M."/>
            <person name="Watanabe K."/>
            <person name="Kumagai A."/>
            <person name="Itakura S."/>
            <person name="Fukuzumi Y."/>
            <person name="Fujimori Y."/>
            <person name="Komiyama M."/>
            <person name="Tashiro H."/>
            <person name="Tanigami A."/>
            <person name="Fujiwara T."/>
            <person name="Ono T."/>
            <person name="Yamada K."/>
            <person name="Fujii Y."/>
            <person name="Ozaki K."/>
            <person name="Hirao M."/>
            <person name="Ohmori Y."/>
            <person name="Kawabata A."/>
            <person name="Hikiji T."/>
            <person name="Kobatake N."/>
            <person name="Inagaki H."/>
            <person name="Ikema Y."/>
            <person name="Okamoto S."/>
            <person name="Okitani R."/>
            <person name="Kawakami T."/>
            <person name="Noguchi S."/>
            <person name="Itoh T."/>
            <person name="Shigeta K."/>
            <person name="Senba T."/>
            <person name="Matsumura K."/>
            <person name="Nakajima Y."/>
            <person name="Mizuno T."/>
            <person name="Morinaga M."/>
            <person name="Sasaki M."/>
            <person name="Togashi T."/>
            <person name="Oyama M."/>
            <person name="Hata H."/>
            <person name="Watanabe M."/>
            <person name="Komatsu T."/>
            <person name="Mizushima-Sugano J."/>
            <person name="Satoh T."/>
            <person name="Shirai Y."/>
            <person name="Takahashi Y."/>
            <person name="Nakagawa K."/>
            <person name="Okumura K."/>
            <person name="Nagase T."/>
            <person name="Nomura N."/>
            <person name="Kikuchi H."/>
            <person name="Masuho Y."/>
            <person name="Yamashita R."/>
            <person name="Nakai K."/>
            <person name="Yada T."/>
            <person name="Nakamura Y."/>
            <person name="Ohara O."/>
            <person name="Isogai T."/>
            <person name="Sugano S."/>
        </authorList>
    </citation>
    <scope>NUCLEOTIDE SEQUENCE [LARGE SCALE MRNA] (ISOFORMS 1 AND 2)</scope>
    <source>
        <tissue>Testis</tissue>
    </source>
</reference>
<reference key="2">
    <citation type="journal article" date="2004" name="Nature">
        <title>The DNA sequence and analysis of human chromosome 13.</title>
        <authorList>
            <person name="Dunham A."/>
            <person name="Matthews L.H."/>
            <person name="Burton J."/>
            <person name="Ashurst J.L."/>
            <person name="Howe K.L."/>
            <person name="Ashcroft K.J."/>
            <person name="Beare D.M."/>
            <person name="Burford D.C."/>
            <person name="Hunt S.E."/>
            <person name="Griffiths-Jones S."/>
            <person name="Jones M.C."/>
            <person name="Keenan S.J."/>
            <person name="Oliver K."/>
            <person name="Scott C.E."/>
            <person name="Ainscough R."/>
            <person name="Almeida J.P."/>
            <person name="Ambrose K.D."/>
            <person name="Andrews D.T."/>
            <person name="Ashwell R.I.S."/>
            <person name="Babbage A.K."/>
            <person name="Bagguley C.L."/>
            <person name="Bailey J."/>
            <person name="Bannerjee R."/>
            <person name="Barlow K.F."/>
            <person name="Bates K."/>
            <person name="Beasley H."/>
            <person name="Bird C.P."/>
            <person name="Bray-Allen S."/>
            <person name="Brown A.J."/>
            <person name="Brown J.Y."/>
            <person name="Burrill W."/>
            <person name="Carder C."/>
            <person name="Carter N.P."/>
            <person name="Chapman J.C."/>
            <person name="Clamp M.E."/>
            <person name="Clark S.Y."/>
            <person name="Clarke G."/>
            <person name="Clee C.M."/>
            <person name="Clegg S.C."/>
            <person name="Cobley V."/>
            <person name="Collins J.E."/>
            <person name="Corby N."/>
            <person name="Coville G.J."/>
            <person name="Deloukas P."/>
            <person name="Dhami P."/>
            <person name="Dunham I."/>
            <person name="Dunn M."/>
            <person name="Earthrowl M.E."/>
            <person name="Ellington A.G."/>
            <person name="Faulkner L."/>
            <person name="Frankish A.G."/>
            <person name="Frankland J."/>
            <person name="French L."/>
            <person name="Garner P."/>
            <person name="Garnett J."/>
            <person name="Gilbert J.G.R."/>
            <person name="Gilson C.J."/>
            <person name="Ghori J."/>
            <person name="Grafham D.V."/>
            <person name="Gribble S.M."/>
            <person name="Griffiths C."/>
            <person name="Hall R.E."/>
            <person name="Hammond S."/>
            <person name="Harley J.L."/>
            <person name="Hart E.A."/>
            <person name="Heath P.D."/>
            <person name="Howden P.J."/>
            <person name="Huckle E.J."/>
            <person name="Hunt P.J."/>
            <person name="Hunt A.R."/>
            <person name="Johnson C."/>
            <person name="Johnson D."/>
            <person name="Kay M."/>
            <person name="Kimberley A.M."/>
            <person name="King A."/>
            <person name="Laird G.K."/>
            <person name="Langford C.J."/>
            <person name="Lawlor S."/>
            <person name="Leongamornlert D.A."/>
            <person name="Lloyd D.M."/>
            <person name="Lloyd C."/>
            <person name="Loveland J.E."/>
            <person name="Lovell J."/>
            <person name="Martin S."/>
            <person name="Mashreghi-Mohammadi M."/>
            <person name="McLaren S.J."/>
            <person name="McMurray A."/>
            <person name="Milne S."/>
            <person name="Moore M.J.F."/>
            <person name="Nickerson T."/>
            <person name="Palmer S.A."/>
            <person name="Pearce A.V."/>
            <person name="Peck A.I."/>
            <person name="Pelan S."/>
            <person name="Phillimore B."/>
            <person name="Porter K.M."/>
            <person name="Rice C.M."/>
            <person name="Searle S."/>
            <person name="Sehra H.K."/>
            <person name="Shownkeen R."/>
            <person name="Skuce C.D."/>
            <person name="Smith M."/>
            <person name="Steward C.A."/>
            <person name="Sycamore N."/>
            <person name="Tester J."/>
            <person name="Thomas D.W."/>
            <person name="Tracey A."/>
            <person name="Tromans A."/>
            <person name="Tubby B."/>
            <person name="Wall M."/>
            <person name="Wallis J.M."/>
            <person name="West A.P."/>
            <person name="Whitehead S.L."/>
            <person name="Willey D.L."/>
            <person name="Wilming L."/>
            <person name="Wray P.W."/>
            <person name="Wright M.W."/>
            <person name="Young L."/>
            <person name="Coulson A."/>
            <person name="Durbin R.M."/>
            <person name="Hubbard T."/>
            <person name="Sulston J.E."/>
            <person name="Beck S."/>
            <person name="Bentley D.R."/>
            <person name="Rogers J."/>
            <person name="Ross M.T."/>
        </authorList>
    </citation>
    <scope>NUCLEOTIDE SEQUENCE [LARGE SCALE GENOMIC DNA]</scope>
</reference>
<reference key="3">
    <citation type="journal article" date="2004" name="Genome Res.">
        <title>The status, quality, and expansion of the NIH full-length cDNA project: the Mammalian Gene Collection (MGC).</title>
        <authorList>
            <consortium name="The MGC Project Team"/>
        </authorList>
    </citation>
    <scope>NUCLEOTIDE SEQUENCE [LARGE SCALE MRNA] (ISOFORM 2)</scope>
    <source>
        <tissue>Testis</tissue>
    </source>
</reference>
<reference key="4">
    <citation type="journal article" date="2021" name="Proc. Natl. Acad. Sci. U.S.A.">
        <title>ARMC12 regulates spatiotemporal mitochondrial dynamics during spermiogenesis and is required for male fertility.</title>
        <authorList>
            <person name="Shimada K."/>
            <person name="Park S."/>
            <person name="Miyata H."/>
            <person name="Yu Z."/>
            <person name="Morohoshi A."/>
            <person name="Oura S."/>
            <person name="Matzuk M.M."/>
            <person name="Ikawa M."/>
        </authorList>
    </citation>
    <scope>TISSUE SPECIFICITY</scope>
</reference>
<accession>Q8NA61</accession>
<accession>A8K8I5</accession>
<accession>Q8NHV2</accession>
<comment type="subunit">
    <text evidence="1">Homodimer. Binds to NEK1 (By similarity).</text>
</comment>
<comment type="interaction">
    <interactant intactId="EBI-741724">
        <id>Q8NA61</id>
    </interactant>
    <interactant intactId="EBI-351710">
        <id>P12814</id>
        <label>ACTN1</label>
    </interactant>
    <organismsDiffer>false</organismsDiffer>
    <experiments>3</experiments>
</comment>
<comment type="interaction">
    <interactant intactId="EBI-741724">
        <id>Q8NA61</id>
    </interactant>
    <interactant intactId="EBI-8643161">
        <id>Q9NX04</id>
        <label>AIRIM</label>
    </interactant>
    <organismsDiffer>false</organismsDiffer>
    <experiments>3</experiments>
</comment>
<comment type="interaction">
    <interactant intactId="EBI-741724">
        <id>Q8NA61</id>
    </interactant>
    <interactant intactId="EBI-10275150">
        <id>Q8TER5-2</id>
        <label>ARHGEF40</label>
    </interactant>
    <organismsDiffer>false</organismsDiffer>
    <experiments>3</experiments>
</comment>
<comment type="interaction">
    <interactant intactId="EBI-741724">
        <id>Q8NA61</id>
    </interactant>
    <interactant intactId="EBI-742909">
        <id>Q9H6L4</id>
        <label>ARMC7</label>
    </interactant>
    <organismsDiffer>false</organismsDiffer>
    <experiments>3</experiments>
</comment>
<comment type="interaction">
    <interactant intactId="EBI-741724">
        <id>Q8NA61</id>
    </interactant>
    <interactant intactId="EBI-7112211">
        <id>Q9H6X5</id>
        <label>C19orf44</label>
    </interactant>
    <organismsDiffer>false</organismsDiffer>
    <experiments>3</experiments>
</comment>
<comment type="interaction">
    <interactant intactId="EBI-741724">
        <id>Q8NA61</id>
    </interactant>
    <interactant intactId="EBI-10247802">
        <id>Q8IYE0-2</id>
        <label>CCDC146</label>
    </interactant>
    <organismsDiffer>false</organismsDiffer>
    <experiments>3</experiments>
</comment>
<comment type="interaction">
    <interactant intactId="EBI-741724">
        <id>Q8NA61</id>
    </interactant>
    <interactant intactId="EBI-10238351">
        <id>Q9NVL8</id>
        <label>CCDC198</label>
    </interactant>
    <organismsDiffer>false</organismsDiffer>
    <experiments>3</experiments>
</comment>
<comment type="interaction">
    <interactant intactId="EBI-741724">
        <id>Q8NA61</id>
    </interactant>
    <interactant intactId="EBI-3905829">
        <id>P51959</id>
        <label>CCNG1</label>
    </interactant>
    <organismsDiffer>false</organismsDiffer>
    <experiments>3</experiments>
</comment>
<comment type="interaction">
    <interactant intactId="EBI-741724">
        <id>Q8NA61</id>
    </interactant>
    <interactant intactId="EBI-396137">
        <id>Q9UJX2</id>
        <label>CDC23</label>
    </interactant>
    <organismsDiffer>false</organismsDiffer>
    <experiments>3</experiments>
</comment>
<comment type="interaction">
    <interactant intactId="EBI-741724">
        <id>Q8NA61</id>
    </interactant>
    <interactant intactId="EBI-744115">
        <id>Q9C0F1</id>
        <label>CEP44</label>
    </interactant>
    <organismsDiffer>false</organismsDiffer>
    <experiments>4</experiments>
</comment>
<comment type="interaction">
    <interactant intactId="EBI-741724">
        <id>Q8NA61</id>
    </interactant>
    <interactant intactId="EBI-10181988">
        <id>Q8IYX8-2</id>
        <label>CEP57L1</label>
    </interactant>
    <organismsDiffer>false</organismsDiffer>
    <experiments>3</experiments>
</comment>
<comment type="interaction">
    <interactant intactId="EBI-741724">
        <id>Q8NA61</id>
    </interactant>
    <interactant intactId="EBI-372775">
        <id>Q96GE4</id>
        <label>CEP95</label>
    </interactant>
    <organismsDiffer>false</organismsDiffer>
    <experiments>3</experiments>
</comment>
<comment type="interaction">
    <interactant intactId="EBI-741724">
        <id>Q8NA61</id>
    </interactant>
    <interactant intactId="EBI-743375">
        <id>Q9NX63</id>
        <label>CHCHD3</label>
    </interactant>
    <organismsDiffer>false</organismsDiffer>
    <experiments>3</experiments>
</comment>
<comment type="interaction">
    <interactant intactId="EBI-741724">
        <id>Q8NA61</id>
    </interactant>
    <interactant intactId="EBI-741528">
        <id>Q9UKJ5</id>
        <label>CHIC2</label>
    </interactant>
    <organismsDiffer>false</organismsDiffer>
    <experiments>3</experiments>
</comment>
<comment type="interaction">
    <interactant intactId="EBI-741724">
        <id>Q8NA61</id>
    </interactant>
    <interactant intactId="EBI-456371">
        <id>P61024</id>
        <label>CKS1B</label>
    </interactant>
    <organismsDiffer>false</organismsDiffer>
    <experiments>3</experiments>
</comment>
<comment type="interaction">
    <interactant intactId="EBI-741724">
        <id>Q8NA61</id>
    </interactant>
    <interactant intactId="EBI-741032">
        <id>Q8NE01</id>
        <label>CNNM3</label>
    </interactant>
    <organismsDiffer>false</organismsDiffer>
    <experiments>3</experiments>
</comment>
<comment type="interaction">
    <interactant intactId="EBI-741724">
        <id>Q8NA61</id>
    </interactant>
    <interactant intactId="EBI-514206">
        <id>Q9UBT7</id>
        <label>CTNNAL1</label>
    </interactant>
    <organismsDiffer>false</organismsDiffer>
    <experiments>4</experiments>
</comment>
<comment type="interaction">
    <interactant intactId="EBI-741724">
        <id>Q8NA61</id>
    </interactant>
    <interactant intactId="EBI-3922653">
        <id>O95147</id>
        <label>DUSP14</label>
    </interactant>
    <organismsDiffer>false</organismsDiffer>
    <experiments>3</experiments>
</comment>
<comment type="interaction">
    <interactant intactId="EBI-741724">
        <id>Q8NA61</id>
    </interactant>
    <interactant intactId="EBI-10264440">
        <id>Q8IYY4</id>
        <label>DZIP1L</label>
    </interactant>
    <organismsDiffer>false</organismsDiffer>
    <experiments>3</experiments>
</comment>
<comment type="interaction">
    <interactant intactId="EBI-741724">
        <id>Q8NA61</id>
    </interactant>
    <interactant intactId="EBI-398610">
        <id>O60573</id>
        <label>EIF4E2</label>
    </interactant>
    <organismsDiffer>false</organismsDiffer>
    <experiments>3</experiments>
</comment>
<comment type="interaction">
    <interactant intactId="EBI-741724">
        <id>Q8NA61</id>
    </interactant>
    <interactant intactId="EBI-742350">
        <id>Q14241</id>
        <label>ELOA</label>
    </interactant>
    <organismsDiffer>false</organismsDiffer>
    <experiments>3</experiments>
</comment>
<comment type="interaction">
    <interactant intactId="EBI-741724">
        <id>Q8NA61</id>
    </interactant>
    <interactant intactId="EBI-744099">
        <id>Q9H0I2</id>
        <label>ENKD1</label>
    </interactant>
    <organismsDiffer>false</organismsDiffer>
    <experiments>3</experiments>
</comment>
<comment type="interaction">
    <interactant intactId="EBI-741724">
        <id>Q8NA61</id>
    </interactant>
    <interactant intactId="EBI-719941">
        <id>Q3B820</id>
        <label>FAM161A</label>
    </interactant>
    <organismsDiffer>false</organismsDiffer>
    <experiments>3</experiments>
</comment>
<comment type="interaction">
    <interactant intactId="EBI-741724">
        <id>Q8NA61</id>
    </interactant>
    <interactant intactId="EBI-725515">
        <id>O43559</id>
        <label>FRS3</label>
    </interactant>
    <organismsDiffer>false</organismsDiffer>
    <experiments>3</experiments>
</comment>
<comment type="interaction">
    <interactant intactId="EBI-741724">
        <id>Q8NA61</id>
    </interactant>
    <interactant intactId="EBI-10268729">
        <id>Q8N9W4-2</id>
        <label>GOLGA6L2</label>
    </interactant>
    <organismsDiffer>false</organismsDiffer>
    <experiments>3</experiments>
</comment>
<comment type="interaction">
    <interactant intactId="EBI-741724">
        <id>Q8NA61</id>
    </interactant>
    <interactant intactId="EBI-2514791">
        <id>Q96CS2</id>
        <label>HAUS1</label>
    </interactant>
    <organismsDiffer>false</organismsDiffer>
    <experiments>3</experiments>
</comment>
<comment type="interaction">
    <interactant intactId="EBI-741724">
        <id>Q8NA61</id>
    </interactant>
    <interactant intactId="EBI-2125614">
        <id>Q9BVG8</id>
        <label>KIFC3</label>
    </interactant>
    <organismsDiffer>false</organismsDiffer>
    <experiments>5</experiments>
</comment>
<comment type="interaction">
    <interactant intactId="EBI-741724">
        <id>Q8NA61</id>
    </interactant>
    <interactant intactId="EBI-1643885">
        <id>Q6P597</id>
        <label>KLC3</label>
    </interactant>
    <organismsDiffer>false</organismsDiffer>
    <experiments>3</experiments>
</comment>
<comment type="interaction">
    <interactant intactId="EBI-741724">
        <id>Q8NA61</id>
    </interactant>
    <interactant intactId="EBI-10253976">
        <id>Q6PJG3</id>
        <label>LATS1</label>
    </interactant>
    <organismsDiffer>false</organismsDiffer>
    <experiments>3</experiments>
</comment>
<comment type="interaction">
    <interactant intactId="EBI-741724">
        <id>Q8NA61</id>
    </interactant>
    <interactant intactId="EBI-726510">
        <id>Q96BZ8</id>
        <label>LENG1</label>
    </interactant>
    <organismsDiffer>false</organismsDiffer>
    <experiments>3</experiments>
</comment>
<comment type="interaction">
    <interactant intactId="EBI-741724">
        <id>Q8NA61</id>
    </interactant>
    <interactant intactId="EBI-8639312">
        <id>P25800</id>
        <label>LMO1</label>
    </interactant>
    <organismsDiffer>false</organismsDiffer>
    <experiments>3</experiments>
</comment>
<comment type="interaction">
    <interactant intactId="EBI-741724">
        <id>Q8NA61</id>
    </interactant>
    <interactant intactId="EBI-739696">
        <id>P25791</id>
        <label>LMO2</label>
    </interactant>
    <organismsDiffer>false</organismsDiffer>
    <experiments>3</experiments>
</comment>
<comment type="interaction">
    <interactant intactId="EBI-741724">
        <id>Q8NA61</id>
    </interactant>
    <interactant intactId="EBI-742259">
        <id>Q8TAP4</id>
        <label>LMO3</label>
    </interactant>
    <organismsDiffer>false</organismsDiffer>
    <experiments>3</experiments>
</comment>
<comment type="interaction">
    <interactant intactId="EBI-741724">
        <id>Q8NA61</id>
    </interactant>
    <interactant intactId="EBI-514199">
        <id>Q9H204</id>
        <label>MED28</label>
    </interactant>
    <organismsDiffer>false</organismsDiffer>
    <experiments>3</experiments>
</comment>
<comment type="interaction">
    <interactant intactId="EBI-741724">
        <id>Q8NA61</id>
    </interactant>
    <interactant intactId="EBI-749353">
        <id>Q9H7H0</id>
        <label>METTL17</label>
    </interactant>
    <organismsDiffer>false</organismsDiffer>
    <experiments>4</experiments>
</comment>
<comment type="interaction">
    <interactant intactId="EBI-741724">
        <id>Q8NA61</id>
    </interactant>
    <interactant intactId="EBI-744248">
        <id>P40692</id>
        <label>MLH1</label>
    </interactant>
    <organismsDiffer>false</organismsDiffer>
    <experiments>6</experiments>
</comment>
<comment type="interaction">
    <interactant intactId="EBI-741724">
        <id>Q8NA61</id>
    </interactant>
    <interactant intactId="EBI-1757866">
        <id>P00540</id>
        <label>MOS</label>
    </interactant>
    <organismsDiffer>false</organismsDiffer>
    <experiments>3</experiments>
</comment>
<comment type="interaction">
    <interactant intactId="EBI-741724">
        <id>Q8NA61</id>
    </interactant>
    <interactant intactId="EBI-10256685">
        <id>Q7Z2X4</id>
        <label>PID1</label>
    </interactant>
    <organismsDiffer>false</organismsDiffer>
    <experiments>3</experiments>
</comment>
<comment type="interaction">
    <interactant intactId="EBI-741724">
        <id>Q8NA61</id>
    </interactant>
    <interactant intactId="EBI-714158">
        <id>Q13526</id>
        <label>PIN1</label>
    </interactant>
    <organismsDiffer>false</organismsDiffer>
    <experiments>3</experiments>
</comment>
<comment type="interaction">
    <interactant intactId="EBI-741724">
        <id>Q8NA61</id>
    </interactant>
    <interactant intactId="EBI-10241513">
        <id>Q494U1</id>
        <label>PLEKHN1</label>
    </interactant>
    <organismsDiffer>false</organismsDiffer>
    <experiments>3</experiments>
</comment>
<comment type="interaction">
    <interactant intactId="EBI-741724">
        <id>Q8NA61</id>
    </interactant>
    <interactant intactId="EBI-2557469">
        <id>Q6NYC8</id>
        <label>PPP1R18</label>
    </interactant>
    <organismsDiffer>false</organismsDiffer>
    <experiments>3</experiments>
</comment>
<comment type="interaction">
    <interactant intactId="EBI-741724">
        <id>Q8NA61</id>
    </interactant>
    <interactant intactId="EBI-358122">
        <id>P32969</id>
        <label>RPL9P9</label>
    </interactant>
    <organismsDiffer>false</organismsDiffer>
    <experiments>3</experiments>
</comment>
<comment type="interaction">
    <interactant intactId="EBI-741724">
        <id>Q8NA61</id>
    </interactant>
    <interactant intactId="EBI-10217913">
        <id>Q14D33</id>
        <label>RTP5</label>
    </interactant>
    <organismsDiffer>false</organismsDiffer>
    <experiments>3</experiments>
</comment>
<comment type="interaction">
    <interactant intactId="EBI-741724">
        <id>Q8NA61</id>
    </interactant>
    <interactant intactId="EBI-10224192">
        <id>Q06455-4</id>
        <label>RUNX1T1</label>
    </interactant>
    <organismsDiffer>false</organismsDiffer>
    <experiments>3</experiments>
</comment>
<comment type="interaction">
    <interactant intactId="EBI-741724">
        <id>Q8NA61</id>
    </interactant>
    <interactant intactId="EBI-748391">
        <id>Q9BWG6</id>
        <label>SCNM1</label>
    </interactant>
    <organismsDiffer>false</organismsDiffer>
    <experiments>3</experiments>
</comment>
<comment type="interaction">
    <interactant intactId="EBI-741724">
        <id>Q8NA61</id>
    </interactant>
    <interactant intactId="EBI-10225873">
        <id>Q08AM8</id>
        <label>SH3RF2</label>
    </interactant>
    <organismsDiffer>false</organismsDiffer>
    <experiments>3</experiments>
</comment>
<comment type="interaction">
    <interactant intactId="EBI-741724">
        <id>Q8NA61</id>
    </interactant>
    <interactant intactId="EBI-6872807">
        <id>Q8N0S2</id>
        <label>SYCE1</label>
    </interactant>
    <organismsDiffer>false</organismsDiffer>
    <experiments>3</experiments>
</comment>
<comment type="interaction">
    <interactant intactId="EBI-741724">
        <id>Q8NA61</id>
    </interactant>
    <interactant intactId="EBI-954696">
        <id>Q8N8B7</id>
        <label>TCEANC</label>
    </interactant>
    <organismsDiffer>false</organismsDiffer>
    <experiments>3</experiments>
</comment>
<comment type="interaction">
    <interactant intactId="EBI-741724">
        <id>Q8NA61</id>
    </interactant>
    <interactant intactId="EBI-742397">
        <id>Q8IYF3</id>
        <label>TEX11</label>
    </interactant>
    <organismsDiffer>false</organismsDiffer>
    <experiments>3</experiments>
</comment>
<comment type="interaction">
    <interactant intactId="EBI-741724">
        <id>Q8NA61</id>
    </interactant>
    <interactant intactId="EBI-5235829">
        <id>Q8IWZ5</id>
        <label>TRIM42</label>
    </interactant>
    <organismsDiffer>false</organismsDiffer>
    <experiments>3</experiments>
</comment>
<comment type="interaction">
    <interactant intactId="EBI-741724">
        <id>Q8NA61</id>
    </interactant>
    <interactant intactId="EBI-744794">
        <id>Q9BZW7</id>
        <label>TSGA10</label>
    </interactant>
    <organismsDiffer>false</organismsDiffer>
    <experiments>3</experiments>
</comment>
<comment type="interaction">
    <interactant intactId="EBI-741724">
        <id>Q8NA61</id>
    </interactant>
    <interactant intactId="EBI-359793">
        <id>P40222</id>
        <label>TXLNA</label>
    </interactant>
    <organismsDiffer>false</organismsDiffer>
    <experiments>3</experiments>
</comment>
<comment type="interaction">
    <interactant intactId="EBI-741724">
        <id>Q8NA61</id>
    </interactant>
    <interactant intactId="EBI-6116822">
        <id>Q8N3L3</id>
        <label>TXLNB</label>
    </interactant>
    <organismsDiffer>false</organismsDiffer>
    <experiments>3</experiments>
</comment>
<comment type="interaction">
    <interactant intactId="EBI-741724">
        <id>Q8NA61</id>
    </interactant>
    <interactant intactId="EBI-740767">
        <id>Q53FD0</id>
        <label>ZC2HC1C</label>
    </interactant>
    <organismsDiffer>false</organismsDiffer>
    <experiments>3</experiments>
</comment>
<comment type="interaction">
    <interactant intactId="EBI-741724">
        <id>Q8NA61</id>
    </interactant>
    <interactant intactId="EBI-2682299">
        <id>Q96NC0</id>
        <label>ZMAT2</label>
    </interactant>
    <organismsDiffer>false</organismsDiffer>
    <experiments>3</experiments>
</comment>
<comment type="interaction">
    <interactant intactId="EBI-741724">
        <id>Q8NA61</id>
    </interactant>
    <interactant intactId="EBI-10273713">
        <id>Q8TBZ8</id>
        <label>ZNF564</label>
    </interactant>
    <organismsDiffer>false</organismsDiffer>
    <experiments>3</experiments>
</comment>
<comment type="interaction">
    <interactant intactId="EBI-741724">
        <id>Q8NA61</id>
    </interactant>
    <interactant intactId="EBI-745520">
        <id>Q9P0T4</id>
        <label>ZNF581</label>
    </interactant>
    <organismsDiffer>false</organismsDiffer>
    <experiments>3</experiments>
</comment>
<comment type="interaction">
    <interactant intactId="EBI-741724">
        <id>Q8NA61</id>
    </interactant>
    <interactant intactId="EBI-625509">
        <id>Q8N720</id>
        <label>ZNF655</label>
    </interactant>
    <organismsDiffer>false</organismsDiffer>
    <experiments>4</experiments>
</comment>
<comment type="interaction">
    <interactant intactId="EBI-741724">
        <id>Q8NA61</id>
    </interactant>
    <interactant intactId="EBI-10175524">
        <id>B2R6J3</id>
    </interactant>
    <organismsDiffer>false</organismsDiffer>
    <experiments>3</experiments>
</comment>
<comment type="interaction">
    <interactant intactId="EBI-11524851">
        <id>Q8NA61-2</id>
    </interactant>
    <interactant intactId="EBI-745226">
        <id>Q13155</id>
        <label>AIMP2</label>
    </interactant>
    <organismsDiffer>false</organismsDiffer>
    <experiments>5</experiments>
</comment>
<comment type="interaction">
    <interactant intactId="EBI-11524851">
        <id>Q8NA61-2</id>
    </interactant>
    <interactant intactId="EBI-8643161">
        <id>Q9NX04</id>
        <label>AIRIM</label>
    </interactant>
    <organismsDiffer>false</organismsDiffer>
    <experiments>3</experiments>
</comment>
<comment type="interaction">
    <interactant intactId="EBI-11524851">
        <id>Q8NA61-2</id>
    </interactant>
    <interactant intactId="EBI-741753">
        <id>Q00994</id>
        <label>BEX3</label>
    </interactant>
    <organismsDiffer>false</organismsDiffer>
    <experiments>3</experiments>
</comment>
<comment type="interaction">
    <interactant intactId="EBI-11524851">
        <id>Q8NA61-2</id>
    </interactant>
    <interactant intactId="EBI-12061599">
        <id>Q9H6X5-2</id>
        <label>C19orf44</label>
    </interactant>
    <organismsDiffer>false</organismsDiffer>
    <experiments>3</experiments>
</comment>
<comment type="interaction">
    <interactant intactId="EBI-11524851">
        <id>Q8NA61-2</id>
    </interactant>
    <interactant intactId="EBI-11524851">
        <id>Q8NA61-2</id>
        <label>CBY2</label>
    </interactant>
    <organismsDiffer>false</organismsDiffer>
    <experiments>5</experiments>
</comment>
<comment type="interaction">
    <interactant intactId="EBI-11524851">
        <id>Q8NA61-2</id>
    </interactant>
    <interactant intactId="EBI-10749669">
        <id>Q8IYE0</id>
        <label>CCDC146</label>
    </interactant>
    <organismsDiffer>false</organismsDiffer>
    <experiments>3</experiments>
</comment>
<comment type="interaction">
    <interactant intactId="EBI-11524851">
        <id>Q8NA61-2</id>
    </interactant>
    <interactant intactId="EBI-740814">
        <id>Q8N715</id>
        <label>CCDC185</label>
    </interactant>
    <organismsDiffer>false</organismsDiffer>
    <experiments>3</experiments>
</comment>
<comment type="interaction">
    <interactant intactId="EBI-11524851">
        <id>Q8NA61-2</id>
    </interactant>
    <interactant intactId="EBI-10961624">
        <id>Q2TAC2-2</id>
        <label>CCDC57</label>
    </interactant>
    <organismsDiffer>false</organismsDiffer>
    <experiments>3</experiments>
</comment>
<comment type="interaction">
    <interactant intactId="EBI-11524851">
        <id>Q8NA61-2</id>
    </interactant>
    <interactant intactId="EBI-10175300">
        <id>Q8TD31-3</id>
        <label>CCHCR1</label>
    </interactant>
    <organismsDiffer>false</organismsDiffer>
    <experiments>5</experiments>
</comment>
<comment type="interaction">
    <interactant intactId="EBI-11524851">
        <id>Q8NA61-2</id>
    </interactant>
    <interactant intactId="EBI-295634">
        <id>Q16543</id>
        <label>CDC37</label>
    </interactant>
    <organismsDiffer>false</organismsDiffer>
    <experiments>3</experiments>
</comment>
<comment type="interaction">
    <interactant intactId="EBI-11524851">
        <id>Q8NA61-2</id>
    </interactant>
    <interactant intactId="EBI-746238">
        <id>Q07002</id>
        <label>CDK18</label>
    </interactant>
    <organismsDiffer>false</organismsDiffer>
    <experiments>3</experiments>
</comment>
<comment type="interaction">
    <interactant intactId="EBI-11524851">
        <id>Q8NA61-2</id>
    </interactant>
    <interactant intactId="EBI-747776">
        <id>Q53EZ4</id>
        <label>CEP55</label>
    </interactant>
    <organismsDiffer>false</organismsDiffer>
    <experiments>3</experiments>
</comment>
<comment type="interaction">
    <interactant intactId="EBI-11524851">
        <id>Q8NA61-2</id>
    </interactant>
    <interactant intactId="EBI-12348777">
        <id>A1XBS5-3</id>
        <label>CIBAR1</label>
    </interactant>
    <organismsDiffer>false</organismsDiffer>
    <experiments>3</experiments>
</comment>
<comment type="interaction">
    <interactant intactId="EBI-11524851">
        <id>Q8NA61-2</id>
    </interactant>
    <interactant intactId="EBI-456371">
        <id>P61024</id>
        <label>CKS1B</label>
    </interactant>
    <organismsDiffer>false</organismsDiffer>
    <experiments>3</experiments>
</comment>
<comment type="interaction">
    <interactant intactId="EBI-11524851">
        <id>Q8NA61-2</id>
    </interactant>
    <interactant intactId="EBI-741032">
        <id>Q8NE01</id>
        <label>CNNM3</label>
    </interactant>
    <organismsDiffer>false</organismsDiffer>
    <experiments>3</experiments>
</comment>
<comment type="interaction">
    <interactant intactId="EBI-11524851">
        <id>Q8NA61-2</id>
    </interactant>
    <interactant intactId="EBI-11521003">
        <id>Q9UIA0</id>
        <label>CYTH4</label>
    </interactant>
    <organismsDiffer>false</organismsDiffer>
    <experiments>3</experiments>
</comment>
<comment type="interaction">
    <interactant intactId="EBI-11524851">
        <id>Q8NA61-2</id>
    </interactant>
    <interactant intactId="EBI-11984733">
        <id>O60941-5</id>
        <label>DTNB</label>
    </interactant>
    <organismsDiffer>false</organismsDiffer>
    <experiments>3</experiments>
</comment>
<comment type="interaction">
    <interactant intactId="EBI-11524851">
        <id>Q8NA61-2</id>
    </interactant>
    <interactant intactId="EBI-10264440">
        <id>Q8IYY4</id>
        <label>DZIP1L</label>
    </interactant>
    <organismsDiffer>false</organismsDiffer>
    <experiments>5</experiments>
</comment>
<comment type="interaction">
    <interactant intactId="EBI-11524851">
        <id>Q8NA61-2</id>
    </interactant>
    <interactant intactId="EBI-11958551">
        <id>Q8N7B9-2</id>
        <label>EFCAB3</label>
    </interactant>
    <organismsDiffer>false</organismsDiffer>
    <experiments>3</experiments>
</comment>
<comment type="interaction">
    <interactant intactId="EBI-11524851">
        <id>Q8NA61-2</id>
    </interactant>
    <interactant intactId="EBI-744099">
        <id>Q9H0I2</id>
        <label>ENKD1</label>
    </interactant>
    <organismsDiffer>false</organismsDiffer>
    <experiments>3</experiments>
</comment>
<comment type="interaction">
    <interactant intactId="EBI-11524851">
        <id>Q8NA61-2</id>
    </interactant>
    <interactant intactId="EBI-719941">
        <id>Q3B820</id>
        <label>FAM161A</label>
    </interactant>
    <organismsDiffer>false</organismsDiffer>
    <experiments>5</experiments>
</comment>
<comment type="interaction">
    <interactant intactId="EBI-11524851">
        <id>Q8NA61-2</id>
    </interactant>
    <interactant intactId="EBI-2513774">
        <id>O95363</id>
        <label>FARS2</label>
    </interactant>
    <organismsDiffer>false</organismsDiffer>
    <experiments>3</experiments>
</comment>
<comment type="interaction">
    <interactant intactId="EBI-11524851">
        <id>Q8NA61-2</id>
    </interactant>
    <interactant intactId="EBI-2510157">
        <id>Q96EF6</id>
        <label>FBXO17</label>
    </interactant>
    <organismsDiffer>false</organismsDiffer>
    <experiments>3</experiments>
</comment>
<comment type="interaction">
    <interactant intactId="EBI-11524851">
        <id>Q8NA61-2</id>
    </interactant>
    <interactant intactId="EBI-372506">
        <id>Q8TAE8</id>
        <label>GADD45GIP1</label>
    </interactant>
    <organismsDiffer>false</organismsDiffer>
    <experiments>3</experiments>
</comment>
<comment type="interaction">
    <interactant intactId="EBI-11524851">
        <id>Q8NA61-2</id>
    </interactant>
    <interactant intactId="EBI-11163335">
        <id>Q9NYA3</id>
        <label>GOLGA6A</label>
    </interactant>
    <organismsDiffer>false</organismsDiffer>
    <experiments>3</experiments>
</comment>
<comment type="interaction">
    <interactant intactId="EBI-11524851">
        <id>Q8NA61-2</id>
    </interactant>
    <interactant intactId="EBI-7116203">
        <id>O75031</id>
        <label>HSF2BP</label>
    </interactant>
    <organismsDiffer>false</organismsDiffer>
    <experiments>3</experiments>
</comment>
<comment type="interaction">
    <interactant intactId="EBI-11524851">
        <id>Q8NA61-2</id>
    </interactant>
    <interactant intactId="EBI-488533">
        <id>Q8WYH8</id>
        <label>ING5</label>
    </interactant>
    <organismsDiffer>false</organismsDiffer>
    <experiments>6</experiments>
</comment>
<comment type="interaction">
    <interactant intactId="EBI-11524851">
        <id>Q8NA61-2</id>
    </interactant>
    <interactant intactId="EBI-1047335">
        <id>Q9H1K1</id>
        <label>ISCU</label>
    </interactant>
    <organismsDiffer>false</organismsDiffer>
    <experiments>3</experiments>
</comment>
<comment type="interaction">
    <interactant intactId="EBI-11524851">
        <id>Q8NA61-2</id>
    </interactant>
    <interactant intactId="EBI-739493">
        <id>Q6ZU52</id>
        <label>KIAA0408</label>
    </interactant>
    <organismsDiffer>false</organismsDiffer>
    <experiments>5</experiments>
</comment>
<comment type="interaction">
    <interactant intactId="EBI-11524851">
        <id>Q8NA61-2</id>
    </interactant>
    <interactant intactId="EBI-14069005">
        <id>Q9BVG8-5</id>
        <label>KIFC3</label>
    </interactant>
    <organismsDiffer>false</organismsDiffer>
    <experiments>3</experiments>
</comment>
<comment type="interaction">
    <interactant intactId="EBI-11524851">
        <id>Q8NA61-2</id>
    </interactant>
    <interactant intactId="EBI-739832">
        <id>Q8TBB1</id>
        <label>LNX1</label>
    </interactant>
    <organismsDiffer>false</organismsDiffer>
    <experiments>7</experiments>
</comment>
<comment type="interaction">
    <interactant intactId="EBI-11524851">
        <id>Q8NA61-2</id>
    </interactant>
    <interactant intactId="EBI-348259">
        <id>Q96EZ8</id>
        <label>MCRS1</label>
    </interactant>
    <organismsDiffer>false</organismsDiffer>
    <experiments>3</experiments>
</comment>
<comment type="interaction">
    <interactant intactId="EBI-11524851">
        <id>Q8NA61-2</id>
    </interactant>
    <interactant intactId="EBI-514199">
        <id>Q9H204</id>
        <label>MED28</label>
    </interactant>
    <organismsDiffer>false</organismsDiffer>
    <experiments>3</experiments>
</comment>
<comment type="interaction">
    <interactant intactId="EBI-11524851">
        <id>Q8NA61-2</id>
    </interactant>
    <interactant intactId="EBI-11098807">
        <id>Q9H7H0-2</id>
        <label>METTL17</label>
    </interactant>
    <organismsDiffer>false</organismsDiffer>
    <experiments>3</experiments>
</comment>
<comment type="interaction">
    <interactant intactId="EBI-11524851">
        <id>Q8NA61-2</id>
    </interactant>
    <interactant intactId="EBI-14086479">
        <id>Q8IVT4</id>
        <label>MGC50722</label>
    </interactant>
    <organismsDiffer>false</organismsDiffer>
    <experiments>3</experiments>
</comment>
<comment type="interaction">
    <interactant intactId="EBI-11524851">
        <id>Q8NA61-2</id>
    </interactant>
    <interactant intactId="EBI-744248">
        <id>P40692</id>
        <label>MLH1</label>
    </interactant>
    <organismsDiffer>false</organismsDiffer>
    <experiments>11</experiments>
</comment>
<comment type="interaction">
    <interactant intactId="EBI-11524851">
        <id>Q8NA61-2</id>
    </interactant>
    <interactant intactId="EBI-7825413">
        <id>Q96EY8</id>
        <label>MMAB</label>
    </interactant>
    <organismsDiffer>false</organismsDiffer>
    <experiments>3</experiments>
</comment>
<comment type="interaction">
    <interactant intactId="EBI-11524851">
        <id>Q8NA61-2</id>
    </interactant>
    <interactant intactId="EBI-1757866">
        <id>P00540</id>
        <label>MOS</label>
    </interactant>
    <organismsDiffer>false</organismsDiffer>
    <experiments>3</experiments>
</comment>
<comment type="interaction">
    <interactant intactId="EBI-11524851">
        <id>Q8NA61-2</id>
    </interactant>
    <interactant intactId="EBI-11750983">
        <id>Q9HC98-4</id>
        <label>NEK6</label>
    </interactant>
    <organismsDiffer>false</organismsDiffer>
    <experiments>3</experiments>
</comment>
<comment type="interaction">
    <interactant intactId="EBI-11524851">
        <id>Q8NA61-2</id>
    </interactant>
    <interactant intactId="EBI-744782">
        <id>Q9Y5B8</id>
        <label>NME7</label>
    </interactant>
    <organismsDiffer>false</organismsDiffer>
    <experiments>3</experiments>
</comment>
<comment type="interaction">
    <interactant intactId="EBI-11524851">
        <id>Q8NA61-2</id>
    </interactant>
    <interactant intactId="EBI-741158">
        <id>Q96HA8</id>
        <label>NTAQ1</label>
    </interactant>
    <organismsDiffer>false</organismsDiffer>
    <experiments>5</experiments>
</comment>
<comment type="interaction">
    <interactant intactId="EBI-11524851">
        <id>Q8NA61-2</id>
    </interactant>
    <interactant intactId="EBI-536879">
        <id>O43482</id>
        <label>OIP5</label>
    </interactant>
    <organismsDiffer>false</organismsDiffer>
    <experiments>3</experiments>
</comment>
<comment type="interaction">
    <interactant intactId="EBI-11524851">
        <id>Q8NA61-2</id>
    </interactant>
    <interactant intactId="EBI-714158">
        <id>Q13526</id>
        <label>PIN1</label>
    </interactant>
    <organismsDiffer>false</organismsDiffer>
    <experiments>3</experiments>
</comment>
<comment type="interaction">
    <interactant intactId="EBI-11524851">
        <id>Q8NA61-2</id>
    </interactant>
    <interactant intactId="EBI-12014286">
        <id>Q494U1-3</id>
        <label>PLEKHN1</label>
    </interactant>
    <organismsDiffer>false</organismsDiffer>
    <experiments>3</experiments>
</comment>
<comment type="interaction">
    <interactant intactId="EBI-11524851">
        <id>Q8NA61-2</id>
    </interactant>
    <interactant intactId="EBI-1055079">
        <id>O15160</id>
        <label>POLR1C</label>
    </interactant>
    <organismsDiffer>false</organismsDiffer>
    <experiments>5</experiments>
</comment>
<comment type="interaction">
    <interactant intactId="EBI-11524851">
        <id>Q8NA61-2</id>
    </interactant>
    <interactant intactId="EBI-1763225">
        <id>O75145</id>
        <label>PPFIA3</label>
    </interactant>
    <organismsDiffer>false</organismsDiffer>
    <experiments>3</experiments>
</comment>
<comment type="interaction">
    <interactant intactId="EBI-11524851">
        <id>Q8NA61-2</id>
    </interactant>
    <interactant intactId="EBI-1105153">
        <id>Q96KQ4</id>
        <label>PPP1R13B</label>
    </interactant>
    <organismsDiffer>false</organismsDiffer>
    <experiments>3</experiments>
</comment>
<comment type="interaction">
    <interactant intactId="EBI-11524851">
        <id>Q8NA61-2</id>
    </interactant>
    <interactant intactId="EBI-2798416">
        <id>Q99633</id>
        <label>PRPF18</label>
    </interactant>
    <organismsDiffer>false</organismsDiffer>
    <experiments>3</experiments>
</comment>
<comment type="interaction">
    <interactant intactId="EBI-11524851">
        <id>Q8NA61-2</id>
    </interactant>
    <interactant intactId="EBI-1504830">
        <id>Q9P2K3-2</id>
        <label>RCOR3</label>
    </interactant>
    <organismsDiffer>false</organismsDiffer>
    <experiments>3</experiments>
</comment>
<comment type="interaction">
    <interactant intactId="EBI-11524851">
        <id>Q8NA61-2</id>
    </interactant>
    <interactant intactId="EBI-16428950">
        <id>A0A0S2Z4G9</id>
        <label>RNF6</label>
    </interactant>
    <organismsDiffer>false</organismsDiffer>
    <experiments>3</experiments>
</comment>
<comment type="interaction">
    <interactant intactId="EBI-11524851">
        <id>Q8NA61-2</id>
    </interactant>
    <interactant intactId="EBI-11984663">
        <id>Q06455-2</id>
        <label>RUNX1T1</label>
    </interactant>
    <organismsDiffer>false</organismsDiffer>
    <experiments>3</experiments>
</comment>
<comment type="interaction">
    <interactant intactId="EBI-11524851">
        <id>Q8NA61-2</id>
    </interactant>
    <interactant intactId="EBI-748391">
        <id>Q9BWG6</id>
        <label>SCNM1</label>
    </interactant>
    <organismsDiffer>false</organismsDiffer>
    <experiments>5</experiments>
</comment>
<comment type="interaction">
    <interactant intactId="EBI-11524851">
        <id>Q8NA61-2</id>
    </interactant>
    <interactant intactId="EBI-12004298">
        <id>O75971-2</id>
        <label>SNAPC5</label>
    </interactant>
    <organismsDiffer>false</organismsDiffer>
    <experiments>5</experiments>
</comment>
<comment type="interaction">
    <interactant intactId="EBI-11524851">
        <id>Q8NA61-2</id>
    </interactant>
    <interactant intactId="EBI-10295431">
        <id>Q99909</id>
        <label>SSX3</label>
    </interactant>
    <organismsDiffer>false</organismsDiffer>
    <experiments>3</experiments>
</comment>
<comment type="interaction">
    <interactant intactId="EBI-11524851">
        <id>Q8NA61-2</id>
    </interactant>
    <interactant intactId="EBI-6872807">
        <id>Q8N0S2</id>
        <label>SYCE1</label>
    </interactant>
    <organismsDiffer>false</organismsDiffer>
    <experiments>7</experiments>
</comment>
<comment type="interaction">
    <interactant intactId="EBI-11524851">
        <id>Q8NA61-2</id>
    </interactant>
    <interactant intactId="EBI-745392">
        <id>Q9BSW7</id>
        <label>SYT17</label>
    </interactant>
    <organismsDiffer>false</organismsDiffer>
    <experiments>3</experiments>
</comment>
<comment type="interaction">
    <interactant intactId="EBI-11524851">
        <id>Q8NA61-2</id>
    </interactant>
    <interactant intactId="EBI-710310">
        <id>Q15560</id>
        <label>TCEA2</label>
    </interactant>
    <organismsDiffer>false</organismsDiffer>
    <experiments>3</experiments>
</comment>
<comment type="interaction">
    <interactant intactId="EBI-11524851">
        <id>Q8NA61-2</id>
    </interactant>
    <interactant intactId="EBI-11955057">
        <id>Q8N8B7-2</id>
        <label>TCEANC</label>
    </interactant>
    <organismsDiffer>false</organismsDiffer>
    <experiments>3</experiments>
</comment>
<comment type="interaction">
    <interactant intactId="EBI-11524851">
        <id>Q8NA61-2</id>
    </interactant>
    <interactant intactId="EBI-740781">
        <id>Q9BT92</id>
        <label>TCHP</label>
    </interactant>
    <organismsDiffer>false</organismsDiffer>
    <experiments>3</experiments>
</comment>
<comment type="interaction">
    <interactant intactId="EBI-11524851">
        <id>Q8NA61-2</id>
    </interactant>
    <interactant intactId="EBI-11523345">
        <id>Q8IYF3-3</id>
        <label>TEX11</label>
    </interactant>
    <organismsDiffer>false</organismsDiffer>
    <experiments>3</experiments>
</comment>
<comment type="interaction">
    <interactant intactId="EBI-11524851">
        <id>Q8NA61-2</id>
    </interactant>
    <interactant intactId="EBI-11059915">
        <id>Q8N7C3</id>
        <label>TRIML2</label>
    </interactant>
    <organismsDiffer>false</organismsDiffer>
    <experiments>3</experiments>
</comment>
<comment type="interaction">
    <interactant intactId="EBI-11524851">
        <id>Q8NA61-2</id>
    </interactant>
    <interactant intactId="EBI-10241197">
        <id>Q3SY00</id>
        <label>TSGA10IP</label>
    </interactant>
    <organismsDiffer>false</organismsDiffer>
    <experiments>3</experiments>
</comment>
<comment type="interaction">
    <interactant intactId="EBI-11524851">
        <id>Q8NA61-2</id>
    </interactant>
    <interactant intactId="EBI-7877438">
        <id>P42681</id>
        <label>TXK</label>
    </interactant>
    <organismsDiffer>false</organismsDiffer>
    <experiments>3</experiments>
</comment>
<comment type="interaction">
    <interactant intactId="EBI-11524851">
        <id>Q8NA61-2</id>
    </interactant>
    <interactant intactId="EBI-359793">
        <id>P40222</id>
        <label>TXLNA</label>
    </interactant>
    <organismsDiffer>false</organismsDiffer>
    <experiments>3</experiments>
</comment>
<comment type="interaction">
    <interactant intactId="EBI-11524851">
        <id>Q8NA61-2</id>
    </interactant>
    <interactant intactId="EBI-739895">
        <id>Q8N6Y0</id>
        <label>USHBP1</label>
    </interactant>
    <organismsDiffer>false</organismsDiffer>
    <experiments>3</experiments>
</comment>
<comment type="interaction">
    <interactant intactId="EBI-11524851">
        <id>Q8NA61-2</id>
    </interactant>
    <interactant intactId="EBI-8656416">
        <id>Q68DK2-5</id>
        <label>ZFYVE26</label>
    </interactant>
    <organismsDiffer>false</organismsDiffer>
    <experiments>3</experiments>
</comment>
<comment type="interaction">
    <interactant intactId="EBI-11524851">
        <id>Q8NA61-2</id>
    </interactant>
    <interactant intactId="EBI-10177272">
        <id>P15622-3</id>
        <label>ZNF250</label>
    </interactant>
    <organismsDiffer>false</organismsDiffer>
    <experiments>3</experiments>
</comment>
<comment type="interaction">
    <interactant intactId="EBI-11524851">
        <id>Q8NA61-2</id>
    </interactant>
    <interactant intactId="EBI-740727">
        <id>Q8TAU3</id>
        <label>ZNF417</label>
    </interactant>
    <organismsDiffer>false</organismsDiffer>
    <experiments>3</experiments>
</comment>
<comment type="interaction">
    <interactant intactId="EBI-11524851">
        <id>Q8NA61-2</id>
    </interactant>
    <interactant intactId="EBI-10273713">
        <id>Q8TBZ8</id>
        <label>ZNF564</label>
    </interactant>
    <organismsDiffer>false</organismsDiffer>
    <experiments>3</experiments>
</comment>
<comment type="interaction">
    <interactant intactId="EBI-11524851">
        <id>Q8NA61-2</id>
    </interactant>
    <interactant intactId="EBI-10172590">
        <id>Q7Z3I7</id>
        <label>ZNF572</label>
    </interactant>
    <organismsDiffer>false</organismsDiffer>
    <experiments>3</experiments>
</comment>
<comment type="interaction">
    <interactant intactId="EBI-11524851">
        <id>Q8NA61-2</id>
    </interactant>
    <interactant intactId="EBI-745520">
        <id>Q9P0T4</id>
        <label>ZNF581</label>
    </interactant>
    <organismsDiffer>false</organismsDiffer>
    <experiments>3</experiments>
</comment>
<comment type="interaction">
    <interactant intactId="EBI-11524851">
        <id>Q8NA61-2</id>
    </interactant>
    <interactant intactId="EBI-16429014">
        <id>A0A0S2Z5X4</id>
        <label>ZNF688</label>
    </interactant>
    <organismsDiffer>false</organismsDiffer>
    <experiments>3</experiments>
</comment>
<comment type="interaction">
    <interactant intactId="EBI-11524851">
        <id>Q8NA61-2</id>
    </interactant>
    <interactant intactId="EBI-745775">
        <id>Q96H86</id>
        <label>ZNF764</label>
    </interactant>
    <organismsDiffer>false</organismsDiffer>
    <experiments>3</experiments>
</comment>
<comment type="interaction">
    <interactant intactId="EBI-11524851">
        <id>Q8NA61-2</id>
    </interactant>
    <interactant intactId="EBI-3925400">
        <id>A8K8V0</id>
        <label>ZNF785</label>
    </interactant>
    <organismsDiffer>false</organismsDiffer>
    <experiments>3</experiments>
</comment>
<comment type="alternative products">
    <event type="alternative splicing"/>
    <isoform>
        <id>Q8NA61-1</id>
        <name>1</name>
        <sequence type="displayed"/>
    </isoform>
    <isoform>
        <id>Q8NA61-2</id>
        <name>2</name>
        <sequence type="described" ref="VSP_028673 VSP_028674"/>
    </isoform>
</comment>
<comment type="tissue specificity">
    <text evidence="5">Testis-specific.</text>
</comment>
<comment type="similarity">
    <text evidence="8">Belongs to the chibby family. SPERT subfamily.</text>
</comment>
<gene>
    <name evidence="9" type="primary">CBY2</name>
    <name type="synonym">SPERT</name>
</gene>
<feature type="chain" id="PRO_0000307291" description="Protein chibby homolog 2">
    <location>
        <begin position="1"/>
        <end position="448"/>
    </location>
</feature>
<feature type="region of interest" description="Disordered" evidence="4">
    <location>
        <begin position="270"/>
        <end position="323"/>
    </location>
</feature>
<feature type="coiled-coil region" evidence="3">
    <location>
        <begin position="164"/>
        <end position="198"/>
    </location>
</feature>
<feature type="coiled-coil region" evidence="3">
    <location>
        <begin position="242"/>
        <end position="267"/>
    </location>
</feature>
<feature type="coiled-coil region" evidence="3">
    <location>
        <begin position="356"/>
        <end position="414"/>
    </location>
</feature>
<feature type="compositionally biased region" description="Basic and acidic residues" evidence="4">
    <location>
        <begin position="279"/>
        <end position="291"/>
    </location>
</feature>
<feature type="compositionally biased region" description="Basic and acidic residues" evidence="4">
    <location>
        <begin position="307"/>
        <end position="323"/>
    </location>
</feature>
<feature type="modified residue" description="Phosphoserine" evidence="2">
    <location>
        <position position="41"/>
    </location>
</feature>
<feature type="modified residue" description="Phosphoserine" evidence="2">
    <location>
        <position position="86"/>
    </location>
</feature>
<feature type="modified residue" description="Phosphoserine" evidence="2">
    <location>
        <position position="89"/>
    </location>
</feature>
<feature type="modified residue" description="Phosphoserine" evidence="2">
    <location>
        <position position="97"/>
    </location>
</feature>
<feature type="modified residue" description="Phosphoserine" evidence="2">
    <location>
        <position position="124"/>
    </location>
</feature>
<feature type="modified residue" description="Phosphoserine" evidence="2">
    <location>
        <position position="144"/>
    </location>
</feature>
<feature type="modified residue" description="Phosphoserine" evidence="2">
    <location>
        <position position="148"/>
    </location>
</feature>
<feature type="modified residue" description="Phosphoserine" evidence="2">
    <location>
        <position position="150"/>
    </location>
</feature>
<feature type="modified residue" description="Phosphoserine" evidence="2">
    <location>
        <position position="212"/>
    </location>
</feature>
<feature type="modified residue" description="Phosphoserine" evidence="2">
    <location>
        <position position="225"/>
    </location>
</feature>
<feature type="modified residue" description="Phosphoserine" evidence="2">
    <location>
        <position position="335"/>
    </location>
</feature>
<feature type="modified residue" description="Phosphoserine" evidence="2">
    <location>
        <position position="338"/>
    </location>
</feature>
<feature type="splice variant" id="VSP_028673" description="In isoform 2." evidence="6 7">
    <location>
        <begin position="1"/>
        <end position="36"/>
    </location>
</feature>
<feature type="splice variant" id="VSP_028674" description="In isoform 2." evidence="6 7">
    <original>TRSESLEIPISVVLPQ</original>
    <variation>MQPEGLKCRMEESNAE</variation>
    <location>
        <begin position="37"/>
        <end position="52"/>
    </location>
</feature>
<feature type="sequence variant" id="VAR_054064" description="In dbSNP:rs7317245.">
    <original>K</original>
    <variation>E</variation>
    <location>
        <position position="329"/>
    </location>
</feature>
<protein>
    <recommendedName>
        <fullName evidence="8">Protein chibby homolog 2</fullName>
    </recommendedName>
    <alternativeName>
        <fullName>Spermatid-associated protein</fullName>
    </alternativeName>
</protein>
<organism>
    <name type="scientific">Homo sapiens</name>
    <name type="common">Human</name>
    <dbReference type="NCBI Taxonomy" id="9606"/>
    <lineage>
        <taxon>Eukaryota</taxon>
        <taxon>Metazoa</taxon>
        <taxon>Chordata</taxon>
        <taxon>Craniata</taxon>
        <taxon>Vertebrata</taxon>
        <taxon>Euteleostomi</taxon>
        <taxon>Mammalia</taxon>
        <taxon>Eutheria</taxon>
        <taxon>Euarchontoglires</taxon>
        <taxon>Primates</taxon>
        <taxon>Haplorrhini</taxon>
        <taxon>Catarrhini</taxon>
        <taxon>Hominidae</taxon>
        <taxon>Homo</taxon>
    </lineage>
</organism>
<sequence length="448" mass="51570">MSPLECSECFGDQLLHRTYTWQLTLHSRPNYTRKRDTRSESLEIPISVVLPQRGTAEPFPRLHNLYSTPRCAQQAALPRLSRRMASQHSYPLNRFSSVPLDPMERPMSQADLELDYNPPRVQLSDEMFVFQDGRWVNENCRLQSPYFSPSASFHHKLHHKRLAKECMLQEENKSLREENKALREENRMLSKENKILQVFWEEHKASLGREESRAPSPLLHKDSASLEVVKKDHVALQVPRGKEDSTLQLLREENRALQQLLEQKQAYWAQAEDTAAPAEESKPAPSPHEEPCSPGLLQDQGSGLSSRFEEPKGPPARQEDSKELRALRKMVSNMSGPSGEEEAKVGPGLPDGCQPLQLLREMRQALQALLKENRLLQEENRTLQVLRAEHRGFQEENKALWENNKLKLQQKLVIDTVTEVTARMEMLIEELYAFMPARSQDPKKPSRV</sequence>
<proteinExistence type="evidence at protein level"/>